<sequence>MSLFPVIVVFGLSFPPIFFELLLSLAIFWLVRRMLVPTGIYDFVWHPALFNTALYCCLFYLISRLFV</sequence>
<gene>
    <name evidence="1" type="primary">aaeX</name>
    <name type="ordered locus">CKO_04650</name>
</gene>
<evidence type="ECO:0000255" key="1">
    <source>
        <dbReference type="HAMAP-Rule" id="MF_01546"/>
    </source>
</evidence>
<comment type="subcellular location">
    <subcellularLocation>
        <location evidence="1">Cell membrane</location>
        <topology evidence="1">Multi-pass membrane protein</topology>
    </subcellularLocation>
</comment>
<comment type="similarity">
    <text evidence="1">Belongs to the AaeX family.</text>
</comment>
<dbReference type="EMBL" id="CP000822">
    <property type="protein sequence ID" value="ABV15700.1"/>
    <property type="molecule type" value="Genomic_DNA"/>
</dbReference>
<dbReference type="RefSeq" id="WP_000051840.1">
    <property type="nucleotide sequence ID" value="NC_009792.1"/>
</dbReference>
<dbReference type="SMR" id="A8AQD6"/>
<dbReference type="STRING" id="290338.CKO_04650"/>
<dbReference type="GeneID" id="45138179"/>
<dbReference type="KEGG" id="cko:CKO_04650"/>
<dbReference type="HOGENOM" id="CLU_188292_0_0_6"/>
<dbReference type="OrthoDB" id="6080293at2"/>
<dbReference type="Proteomes" id="UP000008148">
    <property type="component" value="Chromosome"/>
</dbReference>
<dbReference type="GO" id="GO:0005886">
    <property type="term" value="C:plasma membrane"/>
    <property type="evidence" value="ECO:0007669"/>
    <property type="project" value="UniProtKB-SubCell"/>
</dbReference>
<dbReference type="HAMAP" id="MF_01546">
    <property type="entry name" value="AaeX"/>
    <property type="match status" value="1"/>
</dbReference>
<dbReference type="InterPro" id="IPR012451">
    <property type="entry name" value="DUF1656"/>
</dbReference>
<dbReference type="NCBIfam" id="NF008615">
    <property type="entry name" value="PRK11594.1"/>
    <property type="match status" value="1"/>
</dbReference>
<dbReference type="Pfam" id="PF07869">
    <property type="entry name" value="DUF1656"/>
    <property type="match status" value="1"/>
</dbReference>
<proteinExistence type="inferred from homology"/>
<reference key="1">
    <citation type="submission" date="2007-08" db="EMBL/GenBank/DDBJ databases">
        <authorList>
            <consortium name="The Citrobacter koseri Genome Sequencing Project"/>
            <person name="McClelland M."/>
            <person name="Sanderson E.K."/>
            <person name="Porwollik S."/>
            <person name="Spieth J."/>
            <person name="Clifton W.S."/>
            <person name="Latreille P."/>
            <person name="Courtney L."/>
            <person name="Wang C."/>
            <person name="Pepin K."/>
            <person name="Bhonagiri V."/>
            <person name="Nash W."/>
            <person name="Johnson M."/>
            <person name="Thiruvilangam P."/>
            <person name="Wilson R."/>
        </authorList>
    </citation>
    <scope>NUCLEOTIDE SEQUENCE [LARGE SCALE GENOMIC DNA]</scope>
    <source>
        <strain>ATCC BAA-895 / CDC 4225-83 / SGSC4696</strain>
    </source>
</reference>
<keyword id="KW-1003">Cell membrane</keyword>
<keyword id="KW-0472">Membrane</keyword>
<keyword id="KW-1185">Reference proteome</keyword>
<keyword id="KW-0812">Transmembrane</keyword>
<keyword id="KW-1133">Transmembrane helix</keyword>
<feature type="chain" id="PRO_1000068809" description="Protein AaeX">
    <location>
        <begin position="1"/>
        <end position="67"/>
    </location>
</feature>
<feature type="transmembrane region" description="Helical" evidence="1">
    <location>
        <begin position="3"/>
        <end position="23"/>
    </location>
</feature>
<feature type="transmembrane region" description="Helical" evidence="1">
    <location>
        <begin position="43"/>
        <end position="63"/>
    </location>
</feature>
<organism>
    <name type="scientific">Citrobacter koseri (strain ATCC BAA-895 / CDC 4225-83 / SGSC4696)</name>
    <dbReference type="NCBI Taxonomy" id="290338"/>
    <lineage>
        <taxon>Bacteria</taxon>
        <taxon>Pseudomonadati</taxon>
        <taxon>Pseudomonadota</taxon>
        <taxon>Gammaproteobacteria</taxon>
        <taxon>Enterobacterales</taxon>
        <taxon>Enterobacteriaceae</taxon>
        <taxon>Citrobacter</taxon>
    </lineage>
</organism>
<protein>
    <recommendedName>
        <fullName evidence="1">Protein AaeX</fullName>
    </recommendedName>
</protein>
<accession>A8AQD6</accession>
<name>AAEX_CITK8</name>